<reference key="1">
    <citation type="journal article" date="2005" name="Nature">
        <title>The genome of the social amoeba Dictyostelium discoideum.</title>
        <authorList>
            <person name="Eichinger L."/>
            <person name="Pachebat J.A."/>
            <person name="Gloeckner G."/>
            <person name="Rajandream M.A."/>
            <person name="Sucgang R."/>
            <person name="Berriman M."/>
            <person name="Song J."/>
            <person name="Olsen R."/>
            <person name="Szafranski K."/>
            <person name="Xu Q."/>
            <person name="Tunggal B."/>
            <person name="Kummerfeld S."/>
            <person name="Madera M."/>
            <person name="Konfortov B.A."/>
            <person name="Rivero F."/>
            <person name="Bankier A.T."/>
            <person name="Lehmann R."/>
            <person name="Hamlin N."/>
            <person name="Davies R."/>
            <person name="Gaudet P."/>
            <person name="Fey P."/>
            <person name="Pilcher K."/>
            <person name="Chen G."/>
            <person name="Saunders D."/>
            <person name="Sodergren E.J."/>
            <person name="Davis P."/>
            <person name="Kerhornou A."/>
            <person name="Nie X."/>
            <person name="Hall N."/>
            <person name="Anjard C."/>
            <person name="Hemphill L."/>
            <person name="Bason N."/>
            <person name="Farbrother P."/>
            <person name="Desany B."/>
            <person name="Just E."/>
            <person name="Morio T."/>
            <person name="Rost R."/>
            <person name="Churcher C.M."/>
            <person name="Cooper J."/>
            <person name="Haydock S."/>
            <person name="van Driessche N."/>
            <person name="Cronin A."/>
            <person name="Goodhead I."/>
            <person name="Muzny D.M."/>
            <person name="Mourier T."/>
            <person name="Pain A."/>
            <person name="Lu M."/>
            <person name="Harper D."/>
            <person name="Lindsay R."/>
            <person name="Hauser H."/>
            <person name="James K.D."/>
            <person name="Quiles M."/>
            <person name="Madan Babu M."/>
            <person name="Saito T."/>
            <person name="Buchrieser C."/>
            <person name="Wardroper A."/>
            <person name="Felder M."/>
            <person name="Thangavelu M."/>
            <person name="Johnson D."/>
            <person name="Knights A."/>
            <person name="Loulseged H."/>
            <person name="Mungall K.L."/>
            <person name="Oliver K."/>
            <person name="Price C."/>
            <person name="Quail M.A."/>
            <person name="Urushihara H."/>
            <person name="Hernandez J."/>
            <person name="Rabbinowitsch E."/>
            <person name="Steffen D."/>
            <person name="Sanders M."/>
            <person name="Ma J."/>
            <person name="Kohara Y."/>
            <person name="Sharp S."/>
            <person name="Simmonds M.N."/>
            <person name="Spiegler S."/>
            <person name="Tivey A."/>
            <person name="Sugano S."/>
            <person name="White B."/>
            <person name="Walker D."/>
            <person name="Woodward J.R."/>
            <person name="Winckler T."/>
            <person name="Tanaka Y."/>
            <person name="Shaulsky G."/>
            <person name="Schleicher M."/>
            <person name="Weinstock G.M."/>
            <person name="Rosenthal A."/>
            <person name="Cox E.C."/>
            <person name="Chisholm R.L."/>
            <person name="Gibbs R.A."/>
            <person name="Loomis W.F."/>
            <person name="Platzer M."/>
            <person name="Kay R.R."/>
            <person name="Williams J.G."/>
            <person name="Dear P.H."/>
            <person name="Noegel A.A."/>
            <person name="Barrell B.G."/>
            <person name="Kuspa A."/>
        </authorList>
    </citation>
    <scope>NUCLEOTIDE SEQUENCE [LARGE SCALE GENOMIC DNA]</scope>
    <source>
        <strain>AX4</strain>
    </source>
</reference>
<reference key="2">
    <citation type="journal article" date="2007" name="Biochimie">
        <title>Mitochondrial carrier family: repertoire and peculiarities of the cellular slime mould Dictyostelium discoideum.</title>
        <authorList>
            <person name="Satre M."/>
            <person name="Mattei S."/>
            <person name="Aubry L."/>
            <person name="Gaudet P."/>
            <person name="Pelosi L."/>
            <person name="Brandolin G."/>
            <person name="Klein G."/>
        </authorList>
    </citation>
    <scope>REVIEW</scope>
</reference>
<dbReference type="EMBL" id="AAFI02000172">
    <property type="protein sequence ID" value="EAL61972.1"/>
    <property type="molecule type" value="Genomic_DNA"/>
</dbReference>
<dbReference type="RefSeq" id="XP_635476.1">
    <property type="nucleotide sequence ID" value="XM_630384.1"/>
</dbReference>
<dbReference type="SMR" id="Q54FE6"/>
<dbReference type="FunCoup" id="Q54FE6">
    <property type="interactions" value="67"/>
</dbReference>
<dbReference type="STRING" id="44689.Q54FE6"/>
<dbReference type="PaxDb" id="44689-DDB0234097"/>
<dbReference type="EnsemblProtists" id="EAL61972">
    <property type="protein sequence ID" value="EAL61972"/>
    <property type="gene ID" value="DDB_G0290913"/>
</dbReference>
<dbReference type="GeneID" id="8627892"/>
<dbReference type="KEGG" id="ddi:DDB_G0290913"/>
<dbReference type="dictyBase" id="DDB_G0290913">
    <property type="gene designation" value="mcfS"/>
</dbReference>
<dbReference type="VEuPathDB" id="AmoebaDB:DDB_G0290913"/>
<dbReference type="eggNOG" id="KOG0758">
    <property type="taxonomic scope" value="Eukaryota"/>
</dbReference>
<dbReference type="HOGENOM" id="CLU_015166_16_3_1"/>
<dbReference type="InParanoid" id="Q54FE6"/>
<dbReference type="OMA" id="VYRESGW"/>
<dbReference type="PhylomeDB" id="Q54FE6"/>
<dbReference type="Reactome" id="R-DDI-70635">
    <property type="pathway name" value="Urea cycle"/>
</dbReference>
<dbReference type="PRO" id="PR:Q54FE6"/>
<dbReference type="Proteomes" id="UP000002195">
    <property type="component" value="Chromosome 5"/>
</dbReference>
<dbReference type="GO" id="GO:0005743">
    <property type="term" value="C:mitochondrial inner membrane"/>
    <property type="evidence" value="ECO:0007669"/>
    <property type="project" value="UniProtKB-SubCell"/>
</dbReference>
<dbReference type="GO" id="GO:0005739">
    <property type="term" value="C:mitochondrion"/>
    <property type="evidence" value="ECO:0000318"/>
    <property type="project" value="GO_Central"/>
</dbReference>
<dbReference type="GO" id="GO:0000064">
    <property type="term" value="F:L-ornithine transmembrane transporter activity"/>
    <property type="evidence" value="ECO:0000318"/>
    <property type="project" value="GO_Central"/>
</dbReference>
<dbReference type="GO" id="GO:1990575">
    <property type="term" value="P:mitochondrial L-ornithine transmembrane transport"/>
    <property type="evidence" value="ECO:0000318"/>
    <property type="project" value="GO_Central"/>
</dbReference>
<dbReference type="FunFam" id="1.50.40.10:FF:000302">
    <property type="entry name" value="Mitochondrial substrate carrier family protein S"/>
    <property type="match status" value="1"/>
</dbReference>
<dbReference type="Gene3D" id="1.50.40.10">
    <property type="entry name" value="Mitochondrial carrier domain"/>
    <property type="match status" value="1"/>
</dbReference>
<dbReference type="InterPro" id="IPR050567">
    <property type="entry name" value="Mitochondrial_Carrier"/>
</dbReference>
<dbReference type="InterPro" id="IPR018108">
    <property type="entry name" value="Mitochondrial_sb/sol_carrier"/>
</dbReference>
<dbReference type="InterPro" id="IPR023395">
    <property type="entry name" value="Mt_carrier_dom_sf"/>
</dbReference>
<dbReference type="PANTHER" id="PTHR45624">
    <property type="entry name" value="MITOCHONDRIAL BASIC AMINO ACIDS TRANSPORTER-RELATED"/>
    <property type="match status" value="1"/>
</dbReference>
<dbReference type="PANTHER" id="PTHR45624:SF12">
    <property type="entry name" value="MITOCHONDRIAL ORNITHINE TRANSPORTER 1"/>
    <property type="match status" value="1"/>
</dbReference>
<dbReference type="Pfam" id="PF00153">
    <property type="entry name" value="Mito_carr"/>
    <property type="match status" value="3"/>
</dbReference>
<dbReference type="SUPFAM" id="SSF103506">
    <property type="entry name" value="Mitochondrial carrier"/>
    <property type="match status" value="1"/>
</dbReference>
<dbReference type="PROSITE" id="PS50920">
    <property type="entry name" value="SOLCAR"/>
    <property type="match status" value="3"/>
</dbReference>
<protein>
    <recommendedName>
        <fullName>Mitochondrial substrate carrier family protein S</fullName>
    </recommendedName>
    <alternativeName>
        <fullName>Carnitine/acylcarnitine translocase</fullName>
        <shortName>CAC</shortName>
    </alternativeName>
    <alternativeName>
        <fullName>Solute carrier family 25 member 20 homolog B</fullName>
    </alternativeName>
</protein>
<proteinExistence type="inferred from homology"/>
<feature type="chain" id="PRO_0000385526" description="Mitochondrial substrate carrier family protein S">
    <location>
        <begin position="1"/>
        <end position="285"/>
    </location>
</feature>
<feature type="topological domain" description="Mitochondrial intermembrane" evidence="1">
    <location>
        <begin position="1"/>
        <end position="9"/>
    </location>
</feature>
<feature type="transmembrane region" description="Helical; Name=1" evidence="2">
    <location>
        <begin position="10"/>
        <end position="30"/>
    </location>
</feature>
<feature type="topological domain" description="Mitochondrial matrix" evidence="1">
    <location>
        <begin position="31"/>
        <end position="61"/>
    </location>
</feature>
<feature type="transmembrane region" description="Helical; Name=2" evidence="2">
    <location>
        <begin position="62"/>
        <end position="82"/>
    </location>
</feature>
<feature type="topological domain" description="Mitochondrial intermembrane" evidence="1">
    <location>
        <begin position="83"/>
        <end position="101"/>
    </location>
</feature>
<feature type="transmembrane region" description="Helical; Name=3" evidence="2">
    <location>
        <begin position="102"/>
        <end position="122"/>
    </location>
</feature>
<feature type="topological domain" description="Mitochondrial matrix" evidence="1">
    <location>
        <begin position="123"/>
        <end position="150"/>
    </location>
</feature>
<feature type="transmembrane region" description="Helical; Name=4" evidence="2">
    <location>
        <begin position="151"/>
        <end position="172"/>
    </location>
</feature>
<feature type="topological domain" description="Mitochondrial intermembrane" evidence="1">
    <location>
        <begin position="173"/>
        <end position="199"/>
    </location>
</feature>
<feature type="transmembrane region" description="Helical; Name=5" evidence="2">
    <location>
        <begin position="200"/>
        <end position="220"/>
    </location>
</feature>
<feature type="topological domain" description="Mitochondrial matrix" evidence="1">
    <location>
        <begin position="221"/>
        <end position="258"/>
    </location>
</feature>
<feature type="transmembrane region" description="Helical; Name=6" evidence="2">
    <location>
        <begin position="259"/>
        <end position="277"/>
    </location>
</feature>
<feature type="topological domain" description="Mitochondrial intermembrane" evidence="1">
    <location>
        <begin position="278"/>
        <end position="285"/>
    </location>
</feature>
<feature type="repeat" description="Solcar 1">
    <location>
        <begin position="4"/>
        <end position="87"/>
    </location>
</feature>
<feature type="repeat" description="Solcar 2">
    <location>
        <begin position="96"/>
        <end position="183"/>
    </location>
</feature>
<feature type="repeat" description="Solcar 3">
    <location>
        <begin position="197"/>
        <end position="283"/>
    </location>
</feature>
<gene>
    <name type="primary">mcfS</name>
    <name type="synonym">slc25a20B</name>
    <name type="ORF">DDB_G0290913</name>
</gene>
<organism>
    <name type="scientific">Dictyostelium discoideum</name>
    <name type="common">Social amoeba</name>
    <dbReference type="NCBI Taxonomy" id="44689"/>
    <lineage>
        <taxon>Eukaryota</taxon>
        <taxon>Amoebozoa</taxon>
        <taxon>Evosea</taxon>
        <taxon>Eumycetozoa</taxon>
        <taxon>Dictyostelia</taxon>
        <taxon>Dictyosteliales</taxon>
        <taxon>Dictyosteliaceae</taxon>
        <taxon>Dictyostelium</taxon>
    </lineage>
</organism>
<evidence type="ECO:0000250" key="1"/>
<evidence type="ECO:0000255" key="2"/>
<evidence type="ECO:0000305" key="3"/>
<comment type="function">
    <text evidence="1">Mitochondrial solute carriers shuttle metabolites, nucleotides, and cofactors through the mitochondrial inner membrane. Mediates the transport of acylcarnitines of different length across the mitochondrial inner membrane from the cytosol to the mitochondrial matrix for their oxidation by the mitochondrial fatty acid-oxidation pathway (By similarity).</text>
</comment>
<comment type="subcellular location">
    <subcellularLocation>
        <location evidence="1">Mitochondrion inner membrane</location>
        <topology evidence="1">Multi-pass membrane protein</topology>
    </subcellularLocation>
</comment>
<comment type="similarity">
    <text evidence="3">Belongs to the mitochondrial carrier (TC 2.A.29) family.</text>
</comment>
<keyword id="KW-0472">Membrane</keyword>
<keyword id="KW-0496">Mitochondrion</keyword>
<keyword id="KW-0999">Mitochondrion inner membrane</keyword>
<keyword id="KW-1185">Reference proteome</keyword>
<keyword id="KW-0677">Repeat</keyword>
<keyword id="KW-0812">Transmembrane</keyword>
<keyword id="KW-1133">Transmembrane helix</keyword>
<keyword id="KW-0813">Transport</keyword>
<accession>Q54FE6</accession>
<name>MCFS_DICDI</name>
<sequence>MSTERGLKDSIAGTVAGAACLFTGHPFDTIRVRLQTSNTPIGIMECFRNTIKYEGFSGLYKGVTSPLFGMMFETAVLFAGYGQMKVLLQKDENTPLTVGQCAIAGGFAGVGASVVLTPVELVKCRLQVQTTGPQKYKGSLDCLVQILKEGGIRGAYRGFTPTIAREFVGNMAFFSTYETCKRYFKNKENKPNDDDELNLPALIISGGLGGMAYWTVLYPVDVAKSKIQISEGAGPSPSIVKVLKEIYSKEGVKGLFRGYTPTIIRSFPANAAMFSVYELVIKLLG</sequence>